<name>COX2_PERFA</name>
<keyword id="KW-0186">Copper</keyword>
<keyword id="KW-0249">Electron transport</keyword>
<keyword id="KW-0460">Magnesium</keyword>
<keyword id="KW-0472">Membrane</keyword>
<keyword id="KW-0479">Metal-binding</keyword>
<keyword id="KW-0496">Mitochondrion</keyword>
<keyword id="KW-0999">Mitochondrion inner membrane</keyword>
<keyword id="KW-0597">Phosphoprotein</keyword>
<keyword id="KW-0679">Respiratory chain</keyword>
<keyword id="KW-1278">Translocase</keyword>
<keyword id="KW-0812">Transmembrane</keyword>
<keyword id="KW-1133">Transmembrane helix</keyword>
<keyword id="KW-0813">Transport</keyword>
<proteinExistence type="inferred from homology"/>
<reference key="1">
    <citation type="journal article" date="1995" name="J. Mol. Evol.">
        <title>Mammalian mitochondrial DNA evolution: a comparison of the cytochrome b and cytochrome c oxidase II genes.</title>
        <authorList>
            <person name="Honeycutt R.L."/>
            <person name="Nedbal M.A."/>
            <person name="Adkins R.M."/>
            <person name="Janecek L.L."/>
        </authorList>
    </citation>
    <scope>NUCLEOTIDE SEQUENCE [GENOMIC DNA]</scope>
</reference>
<sequence>MAYPLQLGLQDATSPIMEELTSFHDHTLMIVFLISTLVLYIISLMLTTKLTHTSTMDAQEIETIWTILPAIILIMIALPSLRVLYMMDEINNPALTVKTMGHQWYWSYEYTDYEDLSFDSYMVNTTDLKPGDLRLLEVDNRVVLPMELPIRMLISSEDVLHSWAVPSLGLKTDAIPGRLNQATVSSSRPGLFYGQCSEICGSNHSFMPIVLEMVPLKYFEAWSASM</sequence>
<evidence type="ECO:0000250" key="1">
    <source>
        <dbReference type="UniProtKB" id="P00403"/>
    </source>
</evidence>
<evidence type="ECO:0000250" key="2">
    <source>
        <dbReference type="UniProtKB" id="P00406"/>
    </source>
</evidence>
<evidence type="ECO:0000250" key="3">
    <source>
        <dbReference type="UniProtKB" id="P00410"/>
    </source>
</evidence>
<evidence type="ECO:0000250" key="4">
    <source>
        <dbReference type="UniProtKB" id="P68530"/>
    </source>
</evidence>
<evidence type="ECO:0000305" key="5"/>
<gene>
    <name type="primary">MT-CO2</name>
    <name type="synonym">COII</name>
    <name type="synonym">COX2</name>
    <name type="synonym">COXII</name>
    <name type="synonym">MTCO2</name>
</gene>
<accession>Q37595</accession>
<geneLocation type="mitochondrion"/>
<comment type="function">
    <text evidence="3">Component of the cytochrome c oxidase, the last enzyme in the mitochondrial electron transport chain which drives oxidative phosphorylation. The respiratory chain contains 3 multisubunit complexes succinate dehydrogenase (complex II, CII), ubiquinol-cytochrome c oxidoreductase (cytochrome b-c1 complex, complex III, CIII) and cytochrome c oxidase (complex IV, CIV), that cooperate to transfer electrons derived from NADH and succinate to molecular oxygen, creating an electrochemical gradient over the inner membrane that drives transmembrane transport and the ATP synthase. Cytochrome c oxidase is the component of the respiratory chain that catalyzes the reduction of oxygen to water. Electrons originating from reduced cytochrome c in the intermembrane space (IMS) are transferred via the dinuclear copper A center (CU(A)) of subunit 2 and heme A of subunit 1 to the active site in subunit 1, a binuclear center (BNC) formed by heme A3 and copper B (CU(B)). The BNC reduces molecular oxygen to 2 water molecules using 4 electrons from cytochrome c in the IMS and 4 protons from the mitochondrial matrix.</text>
</comment>
<comment type="catalytic activity">
    <reaction evidence="3">
        <text>4 Fe(II)-[cytochrome c] + O2 + 8 H(+)(in) = 4 Fe(III)-[cytochrome c] + 2 H2O + 4 H(+)(out)</text>
        <dbReference type="Rhea" id="RHEA:11436"/>
        <dbReference type="Rhea" id="RHEA-COMP:10350"/>
        <dbReference type="Rhea" id="RHEA-COMP:14399"/>
        <dbReference type="ChEBI" id="CHEBI:15377"/>
        <dbReference type="ChEBI" id="CHEBI:15378"/>
        <dbReference type="ChEBI" id="CHEBI:15379"/>
        <dbReference type="ChEBI" id="CHEBI:29033"/>
        <dbReference type="ChEBI" id="CHEBI:29034"/>
        <dbReference type="EC" id="7.1.1.9"/>
    </reaction>
    <physiologicalReaction direction="left-to-right" evidence="3">
        <dbReference type="Rhea" id="RHEA:11437"/>
    </physiologicalReaction>
</comment>
<comment type="cofactor">
    <cofactor evidence="4">
        <name>Cu cation</name>
        <dbReference type="ChEBI" id="CHEBI:23378"/>
    </cofactor>
    <text evidence="4">Binds a dinuclear copper A center per subunit.</text>
</comment>
<comment type="subunit">
    <text evidence="1 4">Component of the cytochrome c oxidase (complex IV, CIV), a multisubunit enzyme composed of 14 subunits. The complex is composed of a catalytic core of 3 subunits MT-CO1, MT-CO2 and MT-CO3, encoded in the mitochondrial DNA, and 11 supernumerary subunits COX4I, COX5A, COX5B, COX6A, COX6B, COX6C, COX7A, COX7B, COX7C, COX8 and NDUFA4, which are encoded in the nuclear genome. The complex exists as a monomer or a dimer and forms supercomplexes (SCs) in the inner mitochondrial membrane with NADH-ubiquinone oxidoreductase (complex I, CI) and ubiquinol-cytochrome c oxidoreductase (cytochrome b-c1 complex, complex III, CIII), resulting in different assemblies (supercomplex SCI(1)III(2)IV(1) and megacomplex MCI(2)III(2)IV(2)) (By similarity). Found in a complex with TMEM177, COA6, COX18, COX20, SCO1 and SCO2. Interacts with TMEM177 in a COX20-dependent manner. Interacts with COX20. Interacts with COX16 (By similarity).</text>
</comment>
<comment type="subcellular location">
    <subcellularLocation>
        <location evidence="4">Mitochondrion inner membrane</location>
        <topology evidence="4">Multi-pass membrane protein</topology>
    </subcellularLocation>
</comment>
<comment type="similarity">
    <text evidence="5">Belongs to the cytochrome c oxidase subunit 2 family.</text>
</comment>
<feature type="chain" id="PRO_0000183657" description="Cytochrome c oxidase subunit 2">
    <location>
        <begin position="1"/>
        <end position="226"/>
    </location>
</feature>
<feature type="topological domain" description="Mitochondrial intermembrane" evidence="4">
    <location>
        <begin position="1"/>
        <end position="14"/>
    </location>
</feature>
<feature type="transmembrane region" description="Helical; Name=I" evidence="4">
    <location>
        <begin position="15"/>
        <end position="45"/>
    </location>
</feature>
<feature type="topological domain" description="Mitochondrial matrix" evidence="4">
    <location>
        <begin position="46"/>
        <end position="59"/>
    </location>
</feature>
<feature type="transmembrane region" description="Helical; Name=II" evidence="4">
    <location>
        <begin position="60"/>
        <end position="87"/>
    </location>
</feature>
<feature type="topological domain" description="Mitochondrial intermembrane" evidence="4">
    <location>
        <begin position="88"/>
        <end position="226"/>
    </location>
</feature>
<feature type="binding site" evidence="4">
    <location>
        <position position="161"/>
    </location>
    <ligand>
        <name>Cu cation</name>
        <dbReference type="ChEBI" id="CHEBI:23378"/>
        <label>A1</label>
    </ligand>
</feature>
<feature type="binding site" evidence="4">
    <location>
        <position position="196"/>
    </location>
    <ligand>
        <name>Cu cation</name>
        <dbReference type="ChEBI" id="CHEBI:23378"/>
        <label>A1</label>
    </ligand>
</feature>
<feature type="binding site" evidence="4">
    <location>
        <position position="196"/>
    </location>
    <ligand>
        <name>Cu cation</name>
        <dbReference type="ChEBI" id="CHEBI:23378"/>
        <label>A2</label>
    </ligand>
</feature>
<feature type="binding site" evidence="4">
    <location>
        <position position="198"/>
    </location>
    <ligand>
        <name>Cu cation</name>
        <dbReference type="ChEBI" id="CHEBI:23378"/>
        <label>A2</label>
    </ligand>
</feature>
<feature type="binding site" evidence="4">
    <location>
        <position position="198"/>
    </location>
    <ligand>
        <name>Mg(2+)</name>
        <dbReference type="ChEBI" id="CHEBI:18420"/>
        <note>ligand shared with MT-CO1</note>
    </ligand>
</feature>
<feature type="binding site" evidence="4">
    <location>
        <position position="200"/>
    </location>
    <ligand>
        <name>Cu cation</name>
        <dbReference type="ChEBI" id="CHEBI:23378"/>
        <label>A1</label>
    </ligand>
</feature>
<feature type="binding site" evidence="4">
    <location>
        <position position="200"/>
    </location>
    <ligand>
        <name>Cu cation</name>
        <dbReference type="ChEBI" id="CHEBI:23378"/>
        <label>A2</label>
    </ligand>
</feature>
<feature type="binding site" evidence="4">
    <location>
        <position position="204"/>
    </location>
    <ligand>
        <name>Cu cation</name>
        <dbReference type="ChEBI" id="CHEBI:23378"/>
        <label>A2</label>
    </ligand>
</feature>
<feature type="binding site" evidence="4">
    <location>
        <position position="207"/>
    </location>
    <ligand>
        <name>Cu cation</name>
        <dbReference type="ChEBI" id="CHEBI:23378"/>
        <label>A1</label>
    </ligand>
</feature>
<feature type="modified residue" description="Phosphotyrosine" evidence="2">
    <location>
        <position position="218"/>
    </location>
</feature>
<protein>
    <recommendedName>
        <fullName>Cytochrome c oxidase subunit 2</fullName>
        <ecNumber>7.1.1.9</ecNumber>
    </recommendedName>
    <alternativeName>
        <fullName>Cytochrome c oxidase polypeptide II</fullName>
    </alternativeName>
</protein>
<dbReference type="EC" id="7.1.1.9"/>
<dbReference type="EMBL" id="U18830">
    <property type="protein sequence ID" value="AAA75618.1"/>
    <property type="molecule type" value="Genomic_DNA"/>
</dbReference>
<dbReference type="SMR" id="Q37595"/>
<dbReference type="GO" id="GO:0005743">
    <property type="term" value="C:mitochondrial inner membrane"/>
    <property type="evidence" value="ECO:0007669"/>
    <property type="project" value="UniProtKB-SubCell"/>
</dbReference>
<dbReference type="GO" id="GO:0045277">
    <property type="term" value="C:respiratory chain complex IV"/>
    <property type="evidence" value="ECO:0000250"/>
    <property type="project" value="UniProtKB"/>
</dbReference>
<dbReference type="GO" id="GO:0005507">
    <property type="term" value="F:copper ion binding"/>
    <property type="evidence" value="ECO:0007669"/>
    <property type="project" value="InterPro"/>
</dbReference>
<dbReference type="GO" id="GO:0004129">
    <property type="term" value="F:cytochrome-c oxidase activity"/>
    <property type="evidence" value="ECO:0007669"/>
    <property type="project" value="UniProtKB-EC"/>
</dbReference>
<dbReference type="GO" id="GO:0042773">
    <property type="term" value="P:ATP synthesis coupled electron transport"/>
    <property type="evidence" value="ECO:0007669"/>
    <property type="project" value="TreeGrafter"/>
</dbReference>
<dbReference type="CDD" id="cd13912">
    <property type="entry name" value="CcO_II_C"/>
    <property type="match status" value="1"/>
</dbReference>
<dbReference type="FunFam" id="1.10.287.90:FF:000001">
    <property type="entry name" value="Cytochrome c oxidase subunit 2"/>
    <property type="match status" value="1"/>
</dbReference>
<dbReference type="FunFam" id="2.60.40.420:FF:000001">
    <property type="entry name" value="Cytochrome c oxidase subunit 2"/>
    <property type="match status" value="1"/>
</dbReference>
<dbReference type="Gene3D" id="1.10.287.90">
    <property type="match status" value="1"/>
</dbReference>
<dbReference type="Gene3D" id="2.60.40.420">
    <property type="entry name" value="Cupredoxins - blue copper proteins"/>
    <property type="match status" value="1"/>
</dbReference>
<dbReference type="InterPro" id="IPR045187">
    <property type="entry name" value="CcO_II"/>
</dbReference>
<dbReference type="InterPro" id="IPR002429">
    <property type="entry name" value="CcO_II-like_C"/>
</dbReference>
<dbReference type="InterPro" id="IPR034210">
    <property type="entry name" value="CcO_II_C"/>
</dbReference>
<dbReference type="InterPro" id="IPR001505">
    <property type="entry name" value="Copper_CuA"/>
</dbReference>
<dbReference type="InterPro" id="IPR008972">
    <property type="entry name" value="Cupredoxin"/>
</dbReference>
<dbReference type="InterPro" id="IPR014222">
    <property type="entry name" value="Cyt_c_oxidase_su2"/>
</dbReference>
<dbReference type="InterPro" id="IPR011759">
    <property type="entry name" value="Cyt_c_oxidase_su2_TM_dom"/>
</dbReference>
<dbReference type="InterPro" id="IPR036257">
    <property type="entry name" value="Cyt_c_oxidase_su2_TM_sf"/>
</dbReference>
<dbReference type="NCBIfam" id="TIGR02866">
    <property type="entry name" value="CoxB"/>
    <property type="match status" value="1"/>
</dbReference>
<dbReference type="PANTHER" id="PTHR22888:SF9">
    <property type="entry name" value="CYTOCHROME C OXIDASE SUBUNIT 2"/>
    <property type="match status" value="1"/>
</dbReference>
<dbReference type="PANTHER" id="PTHR22888">
    <property type="entry name" value="CYTOCHROME C OXIDASE, SUBUNIT II"/>
    <property type="match status" value="1"/>
</dbReference>
<dbReference type="Pfam" id="PF00116">
    <property type="entry name" value="COX2"/>
    <property type="match status" value="1"/>
</dbReference>
<dbReference type="Pfam" id="PF02790">
    <property type="entry name" value="COX2_TM"/>
    <property type="match status" value="1"/>
</dbReference>
<dbReference type="PRINTS" id="PR01166">
    <property type="entry name" value="CYCOXIDASEII"/>
</dbReference>
<dbReference type="SUPFAM" id="SSF49503">
    <property type="entry name" value="Cupredoxins"/>
    <property type="match status" value="1"/>
</dbReference>
<dbReference type="SUPFAM" id="SSF81464">
    <property type="entry name" value="Cytochrome c oxidase subunit II-like, transmembrane region"/>
    <property type="match status" value="1"/>
</dbReference>
<dbReference type="PROSITE" id="PS00078">
    <property type="entry name" value="COX2"/>
    <property type="match status" value="1"/>
</dbReference>
<dbReference type="PROSITE" id="PS50857">
    <property type="entry name" value="COX2_CUA"/>
    <property type="match status" value="1"/>
</dbReference>
<dbReference type="PROSITE" id="PS50999">
    <property type="entry name" value="COX2_TM"/>
    <property type="match status" value="1"/>
</dbReference>
<organism>
    <name type="scientific">Perognathus flavus</name>
    <name type="common">Silky pocket mouse</name>
    <dbReference type="NCBI Taxonomy" id="37443"/>
    <lineage>
        <taxon>Eukaryota</taxon>
        <taxon>Metazoa</taxon>
        <taxon>Chordata</taxon>
        <taxon>Craniata</taxon>
        <taxon>Vertebrata</taxon>
        <taxon>Euteleostomi</taxon>
        <taxon>Mammalia</taxon>
        <taxon>Eutheria</taxon>
        <taxon>Euarchontoglires</taxon>
        <taxon>Glires</taxon>
        <taxon>Rodentia</taxon>
        <taxon>Castorimorpha</taxon>
        <taxon>Heteromyidae</taxon>
        <taxon>Perognathinae</taxon>
        <taxon>Perognathus</taxon>
    </lineage>
</organism>